<comment type="function">
    <text evidence="2">Metallocarboxypeptidase that mediates deglutamylation of tubulin and non-tubulin target proteins. Catalyzes the removal of polyglutamate side chains present on the gamma-carboxyl group of glutamate residues within the C-terminal tail of tubulin protein. Specifically cleaves tubulin long-side-chains, while it is not able to remove the branching point glutamate. Also catalyzes the removal of polyglutamate residues from the carboxy-terminus of non-tubulin proteins such as MYLK.</text>
</comment>
<comment type="catalytic activity">
    <reaction evidence="2">
        <text>(L-glutamyl)(n+1)-gamma-L-glutamyl-L-glutamyl-[protein] + H2O = (L-glutamyl)(n)-gamma-L-glutamyl-L-glutamyl-[protein] + L-glutamate</text>
        <dbReference type="Rhea" id="RHEA:60004"/>
        <dbReference type="Rhea" id="RHEA-COMP:15519"/>
        <dbReference type="Rhea" id="RHEA-COMP:15675"/>
        <dbReference type="ChEBI" id="CHEBI:15377"/>
        <dbReference type="ChEBI" id="CHEBI:29985"/>
        <dbReference type="ChEBI" id="CHEBI:143623"/>
    </reaction>
    <physiologicalReaction direction="left-to-right" evidence="2">
        <dbReference type="Rhea" id="RHEA:60005"/>
    </physiologicalReaction>
</comment>
<comment type="catalytic activity">
    <reaction evidence="2">
        <text>C-terminal L-alpha-aminoacyl-L-glutamyl-L-glutamyl-[tubulin] + H2O = C-terminal L-alpha-aminoacyl-L-glutamyl-[tubulin] + L-glutamate</text>
        <dbReference type="Rhea" id="RHEA:63792"/>
        <dbReference type="Rhea" id="RHEA-COMP:16435"/>
        <dbReference type="Rhea" id="RHEA-COMP:16436"/>
        <dbReference type="ChEBI" id="CHEBI:15377"/>
        <dbReference type="ChEBI" id="CHEBI:29985"/>
        <dbReference type="ChEBI" id="CHEBI:149555"/>
        <dbReference type="ChEBI" id="CHEBI:149556"/>
        <dbReference type="EC" id="3.4.17.24"/>
    </reaction>
    <physiologicalReaction direction="left-to-right" evidence="2">
        <dbReference type="Rhea" id="RHEA:63793"/>
    </physiologicalReaction>
</comment>
<comment type="cofactor">
    <cofactor evidence="1">
        <name>Zn(2+)</name>
        <dbReference type="ChEBI" id="CHEBI:29105"/>
    </cofactor>
    <text evidence="1">Binds 1 zinc ion per subunit.</text>
</comment>
<comment type="subunit">
    <text evidence="2 5">Interacts with MYLK (By similarity). Interacts with TCF4 (PubMed:24094747).</text>
</comment>
<comment type="subcellular location">
    <subcellularLocation>
        <location evidence="5">Cytoplasm</location>
        <location evidence="5">Cytosol</location>
    </subcellularLocation>
</comment>
<comment type="tissue specificity">
    <text evidence="5">Expressed in corneal endothelium.</text>
</comment>
<comment type="disease" evidence="5">
    <disease id="DI-03947">
        <name>Corneal dystrophy, Fuchs endothelial, 8</name>
        <acronym>FECD8</acronym>
        <description>A corneal disease caused by loss of endothelium of the central cornea. It is characterized by focal wart-like guttata that arise from Descemet membrane and develop in the central cornea, epithelial blisters, reduced vision and pain. Descemet membrane is thickened by abnormal collagenous deposition.</description>
        <dbReference type="MIM" id="615523"/>
    </disease>
    <text>The disease is caused by variants affecting the gene represented in this entry.</text>
</comment>
<comment type="similarity">
    <text evidence="6">Belongs to the peptidase M14 family.</text>
</comment>
<comment type="sequence caution" evidence="6">
    <conflict type="miscellaneous discrepancy">
        <sequence resource="EMBL-CDS" id="AAI28153"/>
    </conflict>
    <text>Unlikely isoform. Probable cloning artifact.</text>
</comment>
<comment type="sequence caution" evidence="6">
    <conflict type="miscellaneous discrepancy">
        <sequence resource="EMBL-CDS" id="BAB71299"/>
    </conflict>
    <text>Unlikely isoform. Probable cloning artifact.</text>
</comment>
<protein>
    <recommendedName>
        <fullName evidence="2">Cytosolic carboxypeptidase 4</fullName>
        <ecNumber evidence="2">3.4.17.-</ecNumber>
        <ecNumber evidence="2">3.4.17.24</ecNumber>
    </recommendedName>
    <alternativeName>
        <fullName>ATP/GTP-binding protein-like 1</fullName>
    </alternativeName>
    <alternativeName>
        <fullName evidence="6">Protein deglutamylase CCP4</fullName>
    </alternativeName>
</protein>
<gene>
    <name evidence="7" type="primary">AGBL1</name>
    <name evidence="2" type="synonym">CCP4</name>
</gene>
<proteinExistence type="evidence at protein level"/>
<dbReference type="EC" id="3.4.17.-" evidence="2"/>
<dbReference type="EC" id="3.4.17.24" evidence="2"/>
<dbReference type="EMBL" id="AC016180">
    <property type="status" value="NOT_ANNOTATED_CDS"/>
    <property type="molecule type" value="Genomic_DNA"/>
</dbReference>
<dbReference type="EMBL" id="AC107978">
    <property type="status" value="NOT_ANNOTATED_CDS"/>
    <property type="molecule type" value="Genomic_DNA"/>
</dbReference>
<dbReference type="EMBL" id="AC025842">
    <property type="status" value="NOT_ANNOTATED_CDS"/>
    <property type="molecule type" value="Genomic_DNA"/>
</dbReference>
<dbReference type="EMBL" id="AC069197">
    <property type="status" value="NOT_ANNOTATED_CDS"/>
    <property type="molecule type" value="Genomic_DNA"/>
</dbReference>
<dbReference type="EMBL" id="AC022817">
    <property type="status" value="NOT_ANNOTATED_CDS"/>
    <property type="molecule type" value="Genomic_DNA"/>
</dbReference>
<dbReference type="EMBL" id="AC012229">
    <property type="status" value="NOT_ANNOTATED_CDS"/>
    <property type="molecule type" value="Genomic_DNA"/>
</dbReference>
<dbReference type="EMBL" id="AC018950">
    <property type="status" value="NOT_ANNOTATED_CDS"/>
    <property type="molecule type" value="Genomic_DNA"/>
</dbReference>
<dbReference type="EMBL" id="AC078905">
    <property type="status" value="NOT_ANNOTATED_CDS"/>
    <property type="molecule type" value="Genomic_DNA"/>
</dbReference>
<dbReference type="EMBL" id="AC016987">
    <property type="status" value="NOT_ANNOTATED_CDS"/>
    <property type="molecule type" value="Genomic_DNA"/>
</dbReference>
<dbReference type="EMBL" id="KF456116">
    <property type="status" value="NOT_ANNOTATED_CDS"/>
    <property type="molecule type" value="Genomic_DNA"/>
</dbReference>
<dbReference type="EMBL" id="AK056872">
    <property type="protein sequence ID" value="BAB71299.1"/>
    <property type="status" value="ALT_SEQ"/>
    <property type="molecule type" value="mRNA"/>
</dbReference>
<dbReference type="EMBL" id="BC128152">
    <property type="protein sequence ID" value="AAI28153.1"/>
    <property type="status" value="ALT_SEQ"/>
    <property type="molecule type" value="mRNA"/>
</dbReference>
<dbReference type="CCDS" id="CCDS58398.2"/>
<dbReference type="RefSeq" id="NP_689549.3">
    <property type="nucleotide sequence ID" value="NM_152336.4"/>
</dbReference>
<dbReference type="SMR" id="Q96MI9"/>
<dbReference type="BioGRID" id="125828">
    <property type="interactions" value="7"/>
</dbReference>
<dbReference type="FunCoup" id="Q96MI9">
    <property type="interactions" value="13"/>
</dbReference>
<dbReference type="STRING" id="9606.ENSP00000413001"/>
<dbReference type="MEROPS" id="M14.030"/>
<dbReference type="GlyGen" id="Q96MI9">
    <property type="glycosylation" value="4 sites, 1 O-linked glycan (2 sites)"/>
</dbReference>
<dbReference type="iPTMnet" id="Q96MI9"/>
<dbReference type="PhosphoSitePlus" id="Q96MI9"/>
<dbReference type="BioMuta" id="AGBL1"/>
<dbReference type="DMDM" id="158706472"/>
<dbReference type="jPOST" id="Q96MI9"/>
<dbReference type="MassIVE" id="Q96MI9"/>
<dbReference type="PaxDb" id="9606-ENSP00000413001"/>
<dbReference type="PeptideAtlas" id="Q96MI9"/>
<dbReference type="Antibodypedia" id="78500">
    <property type="antibodies" value="41 antibodies from 17 providers"/>
</dbReference>
<dbReference type="DNASU" id="123624"/>
<dbReference type="Ensembl" id="ENST00000441037.7">
    <property type="protein sequence ID" value="ENSP00000413001.3"/>
    <property type="gene ID" value="ENSG00000273540.5"/>
</dbReference>
<dbReference type="GeneID" id="123624"/>
<dbReference type="KEGG" id="hsa:123624"/>
<dbReference type="UCSC" id="uc002blz.2">
    <property type="organism name" value="human"/>
</dbReference>
<dbReference type="AGR" id="HGNC:26504"/>
<dbReference type="CTD" id="123624"/>
<dbReference type="DisGeNET" id="123624"/>
<dbReference type="GeneCards" id="AGBL1"/>
<dbReference type="HGNC" id="HGNC:26504">
    <property type="gene designation" value="AGBL1"/>
</dbReference>
<dbReference type="HPA" id="ENSG00000273540">
    <property type="expression patterns" value="Group enriched (skeletal muscle, tongue)"/>
</dbReference>
<dbReference type="MalaCards" id="AGBL1"/>
<dbReference type="MIM" id="615496">
    <property type="type" value="gene"/>
</dbReference>
<dbReference type="MIM" id="615523">
    <property type="type" value="phenotype"/>
</dbReference>
<dbReference type="neXtProt" id="NX_Q96MI9"/>
<dbReference type="OpenTargets" id="ENSG00000273540"/>
<dbReference type="Orphanet" id="98974">
    <property type="disease" value="Fuchs endothelial corneal dystrophy"/>
</dbReference>
<dbReference type="PharmGKB" id="PA134923894"/>
<dbReference type="VEuPathDB" id="HostDB:ENSG00000273540"/>
<dbReference type="eggNOG" id="KOG3641">
    <property type="taxonomic scope" value="Eukaryota"/>
</dbReference>
<dbReference type="GeneTree" id="ENSGT00940000160936"/>
<dbReference type="InParanoid" id="Q96MI9"/>
<dbReference type="OMA" id="SNQHHQW"/>
<dbReference type="OrthoDB" id="10253041at2759"/>
<dbReference type="PAN-GO" id="Q96MI9">
    <property type="GO annotations" value="2 GO annotations based on evolutionary models"/>
</dbReference>
<dbReference type="PhylomeDB" id="Q96MI9"/>
<dbReference type="TreeFam" id="TF313794"/>
<dbReference type="PathwayCommons" id="Q96MI9"/>
<dbReference type="Reactome" id="R-HSA-8955332">
    <property type="pathway name" value="Carboxyterminal post-translational modifications of tubulin"/>
</dbReference>
<dbReference type="SignaLink" id="Q96MI9"/>
<dbReference type="BioGRID-ORCS" id="123624">
    <property type="hits" value="8 hits in 1135 CRISPR screens"/>
</dbReference>
<dbReference type="ChiTaRS" id="AGBL1">
    <property type="organism name" value="human"/>
</dbReference>
<dbReference type="GenomeRNAi" id="123624"/>
<dbReference type="Pharos" id="Q96MI9">
    <property type="development level" value="Tdark"/>
</dbReference>
<dbReference type="PRO" id="PR:Q96MI9"/>
<dbReference type="Proteomes" id="UP000005640">
    <property type="component" value="Chromosome 15"/>
</dbReference>
<dbReference type="RNAct" id="Q96MI9">
    <property type="molecule type" value="protein"/>
</dbReference>
<dbReference type="Bgee" id="ENSG00000273540">
    <property type="expression patterns" value="Expressed in biceps brachii and 61 other cell types or tissues"/>
</dbReference>
<dbReference type="ExpressionAtlas" id="Q96MI9">
    <property type="expression patterns" value="baseline and differential"/>
</dbReference>
<dbReference type="GO" id="GO:0005737">
    <property type="term" value="C:cytoplasm"/>
    <property type="evidence" value="ECO:0000318"/>
    <property type="project" value="GO_Central"/>
</dbReference>
<dbReference type="GO" id="GO:0005829">
    <property type="term" value="C:cytosol"/>
    <property type="evidence" value="ECO:0007669"/>
    <property type="project" value="UniProtKB-SubCell"/>
</dbReference>
<dbReference type="GO" id="GO:0015630">
    <property type="term" value="C:microtubule cytoskeleton"/>
    <property type="evidence" value="ECO:0000318"/>
    <property type="project" value="GO_Central"/>
</dbReference>
<dbReference type="GO" id="GO:0004181">
    <property type="term" value="F:metallocarboxypeptidase activity"/>
    <property type="evidence" value="ECO:0000250"/>
    <property type="project" value="UniProtKB"/>
</dbReference>
<dbReference type="GO" id="GO:0015631">
    <property type="term" value="F:tubulin binding"/>
    <property type="evidence" value="ECO:0000250"/>
    <property type="project" value="UniProtKB"/>
</dbReference>
<dbReference type="GO" id="GO:0008270">
    <property type="term" value="F:zinc ion binding"/>
    <property type="evidence" value="ECO:0007669"/>
    <property type="project" value="InterPro"/>
</dbReference>
<dbReference type="GO" id="GO:0035609">
    <property type="term" value="P:C-terminal protein deglutamylation"/>
    <property type="evidence" value="ECO:0000250"/>
    <property type="project" value="UniProtKB"/>
</dbReference>
<dbReference type="GO" id="GO:0035610">
    <property type="term" value="P:protein side chain deglutamylation"/>
    <property type="evidence" value="ECO:0000250"/>
    <property type="project" value="UniProtKB"/>
</dbReference>
<dbReference type="GO" id="GO:0006508">
    <property type="term" value="P:proteolysis"/>
    <property type="evidence" value="ECO:0007669"/>
    <property type="project" value="UniProtKB-KW"/>
</dbReference>
<dbReference type="CDD" id="cd06906">
    <property type="entry name" value="M14_Nna1"/>
    <property type="match status" value="1"/>
</dbReference>
<dbReference type="FunFam" id="3.40.630.10:FF:000024">
    <property type="entry name" value="ATP/GTP binding protein 1"/>
    <property type="match status" value="1"/>
</dbReference>
<dbReference type="FunFam" id="1.25.10.10:FF:000391">
    <property type="entry name" value="ATP/GTP binding protein like 1"/>
    <property type="match status" value="1"/>
</dbReference>
<dbReference type="FunFam" id="2.60.40.3120:FF:000001">
    <property type="entry name" value="cytosolic carboxypeptidase 1 isoform X1"/>
    <property type="match status" value="1"/>
</dbReference>
<dbReference type="Gene3D" id="2.60.40.3120">
    <property type="match status" value="1"/>
</dbReference>
<dbReference type="Gene3D" id="1.25.10.10">
    <property type="entry name" value="Leucine-rich Repeat Variant"/>
    <property type="match status" value="1"/>
</dbReference>
<dbReference type="Gene3D" id="3.40.630.10">
    <property type="entry name" value="Zn peptidases"/>
    <property type="match status" value="1"/>
</dbReference>
<dbReference type="InterPro" id="IPR011989">
    <property type="entry name" value="ARM-like"/>
</dbReference>
<dbReference type="InterPro" id="IPR016024">
    <property type="entry name" value="ARM-type_fold"/>
</dbReference>
<dbReference type="InterPro" id="IPR033852">
    <property type="entry name" value="CBPC1/4"/>
</dbReference>
<dbReference type="InterPro" id="IPR050821">
    <property type="entry name" value="Cytosolic_carboxypeptidase"/>
</dbReference>
<dbReference type="InterPro" id="IPR040626">
    <property type="entry name" value="Pepdidase_M14_N"/>
</dbReference>
<dbReference type="InterPro" id="IPR000834">
    <property type="entry name" value="Peptidase_M14"/>
</dbReference>
<dbReference type="PANTHER" id="PTHR12756">
    <property type="entry name" value="CYTOSOLIC CARBOXYPEPTIDASE"/>
    <property type="match status" value="1"/>
</dbReference>
<dbReference type="PANTHER" id="PTHR12756:SF5">
    <property type="entry name" value="CYTOSOLIC CARBOXYPEPTIDASE 4"/>
    <property type="match status" value="1"/>
</dbReference>
<dbReference type="Pfam" id="PF18027">
    <property type="entry name" value="Pepdidase_M14_N"/>
    <property type="match status" value="1"/>
</dbReference>
<dbReference type="Pfam" id="PF00246">
    <property type="entry name" value="Peptidase_M14"/>
    <property type="match status" value="1"/>
</dbReference>
<dbReference type="SUPFAM" id="SSF48371">
    <property type="entry name" value="ARM repeat"/>
    <property type="match status" value="1"/>
</dbReference>
<dbReference type="SUPFAM" id="SSF53187">
    <property type="entry name" value="Zn-dependent exopeptidases"/>
    <property type="match status" value="1"/>
</dbReference>
<dbReference type="PROSITE" id="PS52035">
    <property type="entry name" value="PEPTIDASE_M14"/>
    <property type="match status" value="1"/>
</dbReference>
<sequence>MAEQEASGLQVLLHTLQSSSDKESILTILKVLGDLLSVGTDRRIHYMISKGGSEALLQTLVDTARTAPPDYDILLPLFRLLAKVGLRDKKIGRKALELEALDVTLILARKNLSHGQNLLHCLWALRVFASSVSMGAMLGINGAMELLFKVITPYTRKRTQAIRAATEVLAALLKSKSNGRRAVNRGYVTSLLGLHQDWHSHDTANAYVQIRRGLLLCLRHIAALRSGREAFLAAQGMEILFSTTQNCLDDKSMEPVISVVLQILRQCYPTSPLPLVTASSAYAFPVPGCITTEPPHDLPEEDFEDDGDDEVDKDSDTEDGKVEDDDLETDVNKLSSKPGLDRPEEELMQYEVMCLELSYSFEELQSKLGDDLNSEKTQYANHHHIPAAASSKQHCYSKDQSSCGQEREYAVQTSLLCRVKTGRSTVHLGSKKNPGVNLYQNVQSNSLRRDSSESEIPDIQASPKADAWDVDAIFCPRMSASFSNSTRTREVVKVIDKLLQTHLKRVPFHDPYLYMAKARRTSSVVDFKMMAFPDVWGHCPPPTTQPMLERKCGVQRIRIFEDIRRLIQPSDVINKVVFSLDEPWPLQDNASNCLRFFSKFESGNLRKAIQVREFEYDLLVNADVNSTQHQQWFYFKVSGMQAAIPYHFNIINCEKPNSQFNYGMQPTLYSVKEALLGKPTWIRTGHEICYYKNHYRQSTAVAGGASGKCYYTLTFAVTFPHSEDVCYLAYHYPYTYTALMTHLDILEKSVNLKEVYFRQDVLCQTLGGNPCPLVTITAMPESNSDEHLEQFRHRPYQVITARVHPGESNASWVMKGTLEFLVSSDPVARLLRENFIFKIIPMLNPDGVINGNHRCSLSGEDLNRQWLSPSAHLQPTIYHAKGLLYHLSSIGRSPVVFCDFHGHSQKKNVFLYGCSIKETLWQAACTVGTSTILEEVNYRTLPKILDKLAPAFTMSSCSFLVEKSRASTARVVVWREMGVSRSYTMESSYCGCNQGPYQCTQRLLERTKNERAHPVDGLQGLQFGTRELEEMGAMFCLGLLILELKSASCSHQLLAQAATLLSAEEDALDQHLQRLKSSNFLPKHIWFAYHFFAITNFFKMNLLLHVSPVCDT</sequence>
<name>CBPC4_HUMAN</name>
<feature type="chain" id="PRO_0000304999" description="Cytosolic carboxypeptidase 4">
    <location>
        <begin position="1"/>
        <end position="1112"/>
    </location>
</feature>
<feature type="domain" description="Peptidase M14" evidence="3">
    <location>
        <begin position="732"/>
        <end position="1022"/>
    </location>
</feature>
<feature type="region of interest" description="Disordered" evidence="4">
    <location>
        <begin position="291"/>
        <end position="345"/>
    </location>
</feature>
<feature type="compositionally biased region" description="Acidic residues" evidence="4">
    <location>
        <begin position="299"/>
        <end position="329"/>
    </location>
</feature>
<feature type="active site" description="Proton donor/acceptor" evidence="3">
    <location>
        <position position="986"/>
    </location>
</feature>
<feature type="binding site" evidence="3">
    <location>
        <position position="804"/>
    </location>
    <ligand>
        <name>Zn(2+)</name>
        <dbReference type="ChEBI" id="CHEBI:29105"/>
        <note>catalytic</note>
    </ligand>
</feature>
<feature type="binding site" evidence="3">
    <location>
        <position position="807"/>
    </location>
    <ligand>
        <name>Zn(2+)</name>
        <dbReference type="ChEBI" id="CHEBI:29105"/>
        <note>catalytic</note>
    </ligand>
</feature>
<feature type="binding site" evidence="3">
    <location>
        <position position="901"/>
    </location>
    <ligand>
        <name>Zn(2+)</name>
        <dbReference type="ChEBI" id="CHEBI:29105"/>
        <note>catalytic</note>
    </ligand>
</feature>
<feature type="sequence variant" id="VAR_048604" description="In dbSNP:rs8029810.">
    <original>P</original>
    <variation>L</variation>
    <location>
        <position position="463"/>
    </location>
</feature>
<feature type="sequence variant" id="VAR_048605" description="In dbSNP:rs11857527.">
    <original>S</original>
    <variation>P</variation>
    <location>
        <position position="481"/>
    </location>
</feature>
<feature type="sequence variant" id="VAR_070225" description="In FECD8; decreased TCF4-binding; dbSNP:rs181958589." evidence="5">
    <original>C</original>
    <variation>S</variation>
    <location>
        <position position="1036"/>
    </location>
</feature>
<feature type="sequence variant" id="VAR_059195" description="In dbSNP:rs8028043.">
    <original>Q</original>
    <variation>R</variation>
    <location>
        <position position="1056"/>
    </location>
</feature>
<feature type="sequence variant" id="VAR_070226" description="In FECD8; enriched in the nucleus, decreased TCF4-binding." evidence="5">
    <location>
        <begin position="1075"/>
        <end position="1112"/>
    </location>
</feature>
<feature type="sequence conflict" description="In Ref. 2; BAB71299." evidence="6" ref="2">
    <original>V</original>
    <variation>A</variation>
    <location>
        <position position="492"/>
    </location>
</feature>
<feature type="sequence conflict" description="In Ref. 2; BAB71299." evidence="6" ref="2">
    <original>S</original>
    <variation>G</variation>
    <location>
        <position position="570"/>
    </location>
</feature>
<feature type="sequence conflict" description="In Ref. 2; BAB71299." evidence="6" ref="2">
    <original>A</original>
    <variation>D</variation>
    <location>
        <position position="674"/>
    </location>
</feature>
<feature type="sequence conflict" description="In Ref. 3; AAI28153." evidence="6" ref="3">
    <original>G</original>
    <variation>R</variation>
    <location>
        <position position="704"/>
    </location>
</feature>
<accession>Q96MI9</accession>
<accession>A0A1C7CYX3</accession>
<accession>A1A4X5</accession>
<accession>A6NJH6</accession>
<accession>C9JHL5</accession>
<evidence type="ECO:0000250" key="1"/>
<evidence type="ECO:0000250" key="2">
    <source>
        <dbReference type="UniProtKB" id="Q09M05"/>
    </source>
</evidence>
<evidence type="ECO:0000255" key="3">
    <source>
        <dbReference type="PROSITE-ProRule" id="PRU01379"/>
    </source>
</evidence>
<evidence type="ECO:0000256" key="4">
    <source>
        <dbReference type="SAM" id="MobiDB-lite"/>
    </source>
</evidence>
<evidence type="ECO:0000269" key="5">
    <source>
    </source>
</evidence>
<evidence type="ECO:0000305" key="6"/>
<evidence type="ECO:0000312" key="7">
    <source>
        <dbReference type="HGNC" id="HGNC:26504"/>
    </source>
</evidence>
<reference key="1">
    <citation type="journal article" date="2006" name="Nature">
        <title>Analysis of the DNA sequence and duplication history of human chromosome 15.</title>
        <authorList>
            <person name="Zody M.C."/>
            <person name="Garber M."/>
            <person name="Sharpe T."/>
            <person name="Young S.K."/>
            <person name="Rowen L."/>
            <person name="O'Neill K."/>
            <person name="Whittaker C.A."/>
            <person name="Kamal M."/>
            <person name="Chang J.L."/>
            <person name="Cuomo C.A."/>
            <person name="Dewar K."/>
            <person name="FitzGerald M.G."/>
            <person name="Kodira C.D."/>
            <person name="Madan A."/>
            <person name="Qin S."/>
            <person name="Yang X."/>
            <person name="Abbasi N."/>
            <person name="Abouelleil A."/>
            <person name="Arachchi H.M."/>
            <person name="Baradarani L."/>
            <person name="Birditt B."/>
            <person name="Bloom S."/>
            <person name="Bloom T."/>
            <person name="Borowsky M.L."/>
            <person name="Burke J."/>
            <person name="Butler J."/>
            <person name="Cook A."/>
            <person name="DeArellano K."/>
            <person name="DeCaprio D."/>
            <person name="Dorris L. III"/>
            <person name="Dors M."/>
            <person name="Eichler E.E."/>
            <person name="Engels R."/>
            <person name="Fahey J."/>
            <person name="Fleetwood P."/>
            <person name="Friedman C."/>
            <person name="Gearin G."/>
            <person name="Hall J.L."/>
            <person name="Hensley G."/>
            <person name="Johnson E."/>
            <person name="Jones C."/>
            <person name="Kamat A."/>
            <person name="Kaur A."/>
            <person name="Locke D.P."/>
            <person name="Madan A."/>
            <person name="Munson G."/>
            <person name="Jaffe D.B."/>
            <person name="Lui A."/>
            <person name="Macdonald P."/>
            <person name="Mauceli E."/>
            <person name="Naylor J.W."/>
            <person name="Nesbitt R."/>
            <person name="Nicol R."/>
            <person name="O'Leary S.B."/>
            <person name="Ratcliffe A."/>
            <person name="Rounsley S."/>
            <person name="She X."/>
            <person name="Sneddon K.M.B."/>
            <person name="Stewart S."/>
            <person name="Sougnez C."/>
            <person name="Stone S.M."/>
            <person name="Topham K."/>
            <person name="Vincent D."/>
            <person name="Wang S."/>
            <person name="Zimmer A.R."/>
            <person name="Birren B.W."/>
            <person name="Hood L."/>
            <person name="Lander E.S."/>
            <person name="Nusbaum C."/>
        </authorList>
    </citation>
    <scope>NUCLEOTIDE SEQUENCE [LARGE SCALE GENOMIC DNA]</scope>
</reference>
<reference key="2">
    <citation type="journal article" date="2004" name="Nat. Genet.">
        <title>Complete sequencing and characterization of 21,243 full-length human cDNAs.</title>
        <authorList>
            <person name="Ota T."/>
            <person name="Suzuki Y."/>
            <person name="Nishikawa T."/>
            <person name="Otsuki T."/>
            <person name="Sugiyama T."/>
            <person name="Irie R."/>
            <person name="Wakamatsu A."/>
            <person name="Hayashi K."/>
            <person name="Sato H."/>
            <person name="Nagai K."/>
            <person name="Kimura K."/>
            <person name="Makita H."/>
            <person name="Sekine M."/>
            <person name="Obayashi M."/>
            <person name="Nishi T."/>
            <person name="Shibahara T."/>
            <person name="Tanaka T."/>
            <person name="Ishii S."/>
            <person name="Yamamoto J."/>
            <person name="Saito K."/>
            <person name="Kawai Y."/>
            <person name="Isono Y."/>
            <person name="Nakamura Y."/>
            <person name="Nagahari K."/>
            <person name="Murakami K."/>
            <person name="Yasuda T."/>
            <person name="Iwayanagi T."/>
            <person name="Wagatsuma M."/>
            <person name="Shiratori A."/>
            <person name="Sudo H."/>
            <person name="Hosoiri T."/>
            <person name="Kaku Y."/>
            <person name="Kodaira H."/>
            <person name="Kondo H."/>
            <person name="Sugawara M."/>
            <person name="Takahashi M."/>
            <person name="Kanda K."/>
            <person name="Yokoi T."/>
            <person name="Furuya T."/>
            <person name="Kikkawa E."/>
            <person name="Omura Y."/>
            <person name="Abe K."/>
            <person name="Kamihara K."/>
            <person name="Katsuta N."/>
            <person name="Sato K."/>
            <person name="Tanikawa M."/>
            <person name="Yamazaki M."/>
            <person name="Ninomiya K."/>
            <person name="Ishibashi T."/>
            <person name="Yamashita H."/>
            <person name="Murakawa K."/>
            <person name="Fujimori K."/>
            <person name="Tanai H."/>
            <person name="Kimata M."/>
            <person name="Watanabe M."/>
            <person name="Hiraoka S."/>
            <person name="Chiba Y."/>
            <person name="Ishida S."/>
            <person name="Ono Y."/>
            <person name="Takiguchi S."/>
            <person name="Watanabe S."/>
            <person name="Yosida M."/>
            <person name="Hotuta T."/>
            <person name="Kusano J."/>
            <person name="Kanehori K."/>
            <person name="Takahashi-Fujii A."/>
            <person name="Hara H."/>
            <person name="Tanase T.-O."/>
            <person name="Nomura Y."/>
            <person name="Togiya S."/>
            <person name="Komai F."/>
            <person name="Hara R."/>
            <person name="Takeuchi K."/>
            <person name="Arita M."/>
            <person name="Imose N."/>
            <person name="Musashino K."/>
            <person name="Yuuki H."/>
            <person name="Oshima A."/>
            <person name="Sasaki N."/>
            <person name="Aotsuka S."/>
            <person name="Yoshikawa Y."/>
            <person name="Matsunawa H."/>
            <person name="Ichihara T."/>
            <person name="Shiohata N."/>
            <person name="Sano S."/>
            <person name="Moriya S."/>
            <person name="Momiyama H."/>
            <person name="Satoh N."/>
            <person name="Takami S."/>
            <person name="Terashima Y."/>
            <person name="Suzuki O."/>
            <person name="Nakagawa S."/>
            <person name="Senoh A."/>
            <person name="Mizoguchi H."/>
            <person name="Goto Y."/>
            <person name="Shimizu F."/>
            <person name="Wakebe H."/>
            <person name="Hishigaki H."/>
            <person name="Watanabe T."/>
            <person name="Sugiyama A."/>
            <person name="Takemoto M."/>
            <person name="Kawakami B."/>
            <person name="Yamazaki M."/>
            <person name="Watanabe K."/>
            <person name="Kumagai A."/>
            <person name="Itakura S."/>
            <person name="Fukuzumi Y."/>
            <person name="Fujimori Y."/>
            <person name="Komiyama M."/>
            <person name="Tashiro H."/>
            <person name="Tanigami A."/>
            <person name="Fujiwara T."/>
            <person name="Ono T."/>
            <person name="Yamada K."/>
            <person name="Fujii Y."/>
            <person name="Ozaki K."/>
            <person name="Hirao M."/>
            <person name="Ohmori Y."/>
            <person name="Kawabata A."/>
            <person name="Hikiji T."/>
            <person name="Kobatake N."/>
            <person name="Inagaki H."/>
            <person name="Ikema Y."/>
            <person name="Okamoto S."/>
            <person name="Okitani R."/>
            <person name="Kawakami T."/>
            <person name="Noguchi S."/>
            <person name="Itoh T."/>
            <person name="Shigeta K."/>
            <person name="Senba T."/>
            <person name="Matsumura K."/>
            <person name="Nakajima Y."/>
            <person name="Mizuno T."/>
            <person name="Morinaga M."/>
            <person name="Sasaki M."/>
            <person name="Togashi T."/>
            <person name="Oyama M."/>
            <person name="Hata H."/>
            <person name="Watanabe M."/>
            <person name="Komatsu T."/>
            <person name="Mizushima-Sugano J."/>
            <person name="Satoh T."/>
            <person name="Shirai Y."/>
            <person name="Takahashi Y."/>
            <person name="Nakagawa K."/>
            <person name="Okumura K."/>
            <person name="Nagase T."/>
            <person name="Nomura N."/>
            <person name="Kikuchi H."/>
            <person name="Masuho Y."/>
            <person name="Yamashita R."/>
            <person name="Nakai K."/>
            <person name="Yada T."/>
            <person name="Nakamura Y."/>
            <person name="Ohara O."/>
            <person name="Isogai T."/>
            <person name="Sugano S."/>
        </authorList>
    </citation>
    <scope>NUCLEOTIDE SEQUENCE [LARGE SCALE MRNA] OF 323-792</scope>
    <source>
        <tissue>Prostate</tissue>
    </source>
</reference>
<reference key="3">
    <citation type="journal article" date="2004" name="Genome Res.">
        <title>The status, quality, and expansion of the NIH full-length cDNA project: the Mammalian Gene Collection (MGC).</title>
        <authorList>
            <consortium name="The MGC Project Team"/>
        </authorList>
    </citation>
    <scope>NUCLEOTIDE SEQUENCE [LARGE SCALE MRNA] OF 348-792</scope>
</reference>
<reference key="4">
    <citation type="journal article" date="2013" name="Am. J. Hum. Genet.">
        <title>Mutations in AGBL1 cause dominant late-onset Fuchs corneal dystrophy and alter protein-protein interaction with TCF4.</title>
        <authorList>
            <person name="Riazuddin S.A."/>
            <person name="Vasanth S."/>
            <person name="Katsanis N."/>
            <person name="Gottsch J.D."/>
        </authorList>
    </citation>
    <scope>VARIANTS FECD8 SER-1036 AND 1075-LEU--THR-1112 DEL</scope>
    <scope>INTERACTION WITH TCF4</scope>
    <scope>SUBCELLULAR LOCATION</scope>
    <scope>TISSUE SPECIFICITY</scope>
</reference>
<keyword id="KW-0121">Carboxypeptidase</keyword>
<keyword id="KW-1212">Corneal dystrophy</keyword>
<keyword id="KW-0963">Cytoplasm</keyword>
<keyword id="KW-0378">Hydrolase</keyword>
<keyword id="KW-0479">Metal-binding</keyword>
<keyword id="KW-0482">Metalloprotease</keyword>
<keyword id="KW-0645">Protease</keyword>
<keyword id="KW-1267">Proteomics identification</keyword>
<keyword id="KW-1185">Reference proteome</keyword>
<keyword id="KW-0862">Zinc</keyword>
<organism>
    <name type="scientific">Homo sapiens</name>
    <name type="common">Human</name>
    <dbReference type="NCBI Taxonomy" id="9606"/>
    <lineage>
        <taxon>Eukaryota</taxon>
        <taxon>Metazoa</taxon>
        <taxon>Chordata</taxon>
        <taxon>Craniata</taxon>
        <taxon>Vertebrata</taxon>
        <taxon>Euteleostomi</taxon>
        <taxon>Mammalia</taxon>
        <taxon>Eutheria</taxon>
        <taxon>Euarchontoglires</taxon>
        <taxon>Primates</taxon>
        <taxon>Haplorrhini</taxon>
        <taxon>Catarrhini</taxon>
        <taxon>Hominidae</taxon>
        <taxon>Homo</taxon>
    </lineage>
</organism>